<reference key="1">
    <citation type="journal article" date="2002" name="Genome Res.">
        <title>The genome of Methanosarcina acetivorans reveals extensive metabolic and physiological diversity.</title>
        <authorList>
            <person name="Galagan J.E."/>
            <person name="Nusbaum C."/>
            <person name="Roy A."/>
            <person name="Endrizzi M.G."/>
            <person name="Macdonald P."/>
            <person name="FitzHugh W."/>
            <person name="Calvo S."/>
            <person name="Engels R."/>
            <person name="Smirnov S."/>
            <person name="Atnoor D."/>
            <person name="Brown A."/>
            <person name="Allen N."/>
            <person name="Naylor J."/>
            <person name="Stange-Thomann N."/>
            <person name="DeArellano K."/>
            <person name="Johnson R."/>
            <person name="Linton L."/>
            <person name="McEwan P."/>
            <person name="McKernan K."/>
            <person name="Talamas J."/>
            <person name="Tirrell A."/>
            <person name="Ye W."/>
            <person name="Zimmer A."/>
            <person name="Barber R.D."/>
            <person name="Cann I."/>
            <person name="Graham D.E."/>
            <person name="Grahame D.A."/>
            <person name="Guss A.M."/>
            <person name="Hedderich R."/>
            <person name="Ingram-Smith C."/>
            <person name="Kuettner H.C."/>
            <person name="Krzycki J.A."/>
            <person name="Leigh J.A."/>
            <person name="Li W."/>
            <person name="Liu J."/>
            <person name="Mukhopadhyay B."/>
            <person name="Reeve J.N."/>
            <person name="Smith K."/>
            <person name="Springer T.A."/>
            <person name="Umayam L.A."/>
            <person name="White O."/>
            <person name="White R.H."/>
            <person name="de Macario E.C."/>
            <person name="Ferry J.G."/>
            <person name="Jarrell K.F."/>
            <person name="Jing H."/>
            <person name="Macario A.J.L."/>
            <person name="Paulsen I.T."/>
            <person name="Pritchett M."/>
            <person name="Sowers K.R."/>
            <person name="Swanson R.V."/>
            <person name="Zinder S.H."/>
            <person name="Lander E."/>
            <person name="Metcalf W.W."/>
            <person name="Birren B."/>
        </authorList>
    </citation>
    <scope>NUCLEOTIDE SEQUENCE [LARGE SCALE GENOMIC DNA]</scope>
    <source>
        <strain>ATCC 35395 / DSM 2834 / JCM 12185 / C2A</strain>
    </source>
</reference>
<evidence type="ECO:0000255" key="1">
    <source>
        <dbReference type="HAMAP-Rule" id="MF_00082"/>
    </source>
</evidence>
<comment type="function">
    <text evidence="1">Catalyzes the ATP-dependent phosphorylation of N-acetyl-L-glutamate.</text>
</comment>
<comment type="catalytic activity">
    <reaction evidence="1">
        <text>N-acetyl-L-glutamate + ATP = N-acetyl-L-glutamyl 5-phosphate + ADP</text>
        <dbReference type="Rhea" id="RHEA:14629"/>
        <dbReference type="ChEBI" id="CHEBI:30616"/>
        <dbReference type="ChEBI" id="CHEBI:44337"/>
        <dbReference type="ChEBI" id="CHEBI:57936"/>
        <dbReference type="ChEBI" id="CHEBI:456216"/>
        <dbReference type="EC" id="2.7.2.8"/>
    </reaction>
</comment>
<comment type="pathway">
    <text evidence="1">Amino-acid biosynthesis; L-arginine biosynthesis; N(2)-acetyl-L-ornithine from L-glutamate: step 2/4.</text>
</comment>
<comment type="subcellular location">
    <subcellularLocation>
        <location evidence="1">Cytoplasm</location>
    </subcellularLocation>
</comment>
<comment type="similarity">
    <text evidence="1">Belongs to the acetylglutamate kinase family. ArgB subfamily.</text>
</comment>
<dbReference type="EC" id="2.7.2.8" evidence="1"/>
<dbReference type="EMBL" id="AE010299">
    <property type="protein sequence ID" value="AAM07855.1"/>
    <property type="molecule type" value="Genomic_DNA"/>
</dbReference>
<dbReference type="RefSeq" id="WP_011024391.1">
    <property type="nucleotide sequence ID" value="NC_003552.1"/>
</dbReference>
<dbReference type="SMR" id="Q8THJ9"/>
<dbReference type="FunCoup" id="Q8THJ9">
    <property type="interactions" value="122"/>
</dbReference>
<dbReference type="STRING" id="188937.MA_4515"/>
<dbReference type="EnsemblBacteria" id="AAM07855">
    <property type="protein sequence ID" value="AAM07855"/>
    <property type="gene ID" value="MA_4515"/>
</dbReference>
<dbReference type="GeneID" id="1476409"/>
<dbReference type="KEGG" id="mac:MA_4515"/>
<dbReference type="HOGENOM" id="CLU_053680_0_0_2"/>
<dbReference type="InParanoid" id="Q8THJ9"/>
<dbReference type="OrthoDB" id="6816at2157"/>
<dbReference type="PhylomeDB" id="Q8THJ9"/>
<dbReference type="UniPathway" id="UPA00068">
    <property type="reaction ID" value="UER00107"/>
</dbReference>
<dbReference type="Proteomes" id="UP000002487">
    <property type="component" value="Chromosome"/>
</dbReference>
<dbReference type="GO" id="GO:0005737">
    <property type="term" value="C:cytoplasm"/>
    <property type="evidence" value="ECO:0007669"/>
    <property type="project" value="UniProtKB-SubCell"/>
</dbReference>
<dbReference type="GO" id="GO:0003991">
    <property type="term" value="F:acetylglutamate kinase activity"/>
    <property type="evidence" value="ECO:0000318"/>
    <property type="project" value="GO_Central"/>
</dbReference>
<dbReference type="GO" id="GO:0005524">
    <property type="term" value="F:ATP binding"/>
    <property type="evidence" value="ECO:0007669"/>
    <property type="project" value="UniProtKB-UniRule"/>
</dbReference>
<dbReference type="GO" id="GO:0042450">
    <property type="term" value="P:arginine biosynthetic process via ornithine"/>
    <property type="evidence" value="ECO:0007669"/>
    <property type="project" value="UniProtKB-UniRule"/>
</dbReference>
<dbReference type="GO" id="GO:0006526">
    <property type="term" value="P:L-arginine biosynthetic process"/>
    <property type="evidence" value="ECO:0000318"/>
    <property type="project" value="GO_Central"/>
</dbReference>
<dbReference type="CDD" id="cd04250">
    <property type="entry name" value="AAK_NAGK-C"/>
    <property type="match status" value="1"/>
</dbReference>
<dbReference type="FunFam" id="3.40.1160.10:FF:000004">
    <property type="entry name" value="Acetylglutamate kinase"/>
    <property type="match status" value="1"/>
</dbReference>
<dbReference type="Gene3D" id="3.40.1160.10">
    <property type="entry name" value="Acetylglutamate kinase-like"/>
    <property type="match status" value="1"/>
</dbReference>
<dbReference type="HAMAP" id="MF_00082">
    <property type="entry name" value="ArgB"/>
    <property type="match status" value="1"/>
</dbReference>
<dbReference type="InterPro" id="IPR036393">
    <property type="entry name" value="AceGlu_kinase-like_sf"/>
</dbReference>
<dbReference type="InterPro" id="IPR004662">
    <property type="entry name" value="AcgluKinase_fam"/>
</dbReference>
<dbReference type="InterPro" id="IPR037528">
    <property type="entry name" value="ArgB"/>
</dbReference>
<dbReference type="InterPro" id="IPR001048">
    <property type="entry name" value="Asp/Glu/Uridylate_kinase"/>
</dbReference>
<dbReference type="InterPro" id="IPR041727">
    <property type="entry name" value="NAGK-C"/>
</dbReference>
<dbReference type="NCBIfam" id="TIGR00761">
    <property type="entry name" value="argB"/>
    <property type="match status" value="1"/>
</dbReference>
<dbReference type="PANTHER" id="PTHR23342">
    <property type="entry name" value="N-ACETYLGLUTAMATE SYNTHASE"/>
    <property type="match status" value="1"/>
</dbReference>
<dbReference type="PANTHER" id="PTHR23342:SF0">
    <property type="entry name" value="N-ACETYLGLUTAMATE SYNTHASE, MITOCHONDRIAL"/>
    <property type="match status" value="1"/>
</dbReference>
<dbReference type="Pfam" id="PF00696">
    <property type="entry name" value="AA_kinase"/>
    <property type="match status" value="1"/>
</dbReference>
<dbReference type="PIRSF" id="PIRSF000728">
    <property type="entry name" value="NAGK"/>
    <property type="match status" value="1"/>
</dbReference>
<dbReference type="SUPFAM" id="SSF53633">
    <property type="entry name" value="Carbamate kinase-like"/>
    <property type="match status" value="1"/>
</dbReference>
<proteinExistence type="inferred from homology"/>
<accession>Q8THJ9</accession>
<protein>
    <recommendedName>
        <fullName evidence="1">Acetylglutamate kinase</fullName>
        <ecNumber evidence="1">2.7.2.8</ecNumber>
    </recommendedName>
    <alternativeName>
        <fullName evidence="1">N-acetyl-L-glutamate 5-phosphotransferase</fullName>
    </alternativeName>
    <alternativeName>
        <fullName evidence="1">NAG kinase</fullName>
        <shortName evidence="1">NAGK</shortName>
    </alternativeName>
</protein>
<keyword id="KW-0028">Amino-acid biosynthesis</keyword>
<keyword id="KW-0055">Arginine biosynthesis</keyword>
<keyword id="KW-0067">ATP-binding</keyword>
<keyword id="KW-0963">Cytoplasm</keyword>
<keyword id="KW-0418">Kinase</keyword>
<keyword id="KW-0547">Nucleotide-binding</keyword>
<keyword id="KW-1185">Reference proteome</keyword>
<keyword id="KW-0808">Transferase</keyword>
<feature type="chain" id="PRO_0000112693" description="Acetylglutamate kinase">
    <location>
        <begin position="1"/>
        <end position="299"/>
    </location>
</feature>
<feature type="binding site" evidence="1">
    <location>
        <begin position="62"/>
        <end position="63"/>
    </location>
    <ligand>
        <name>substrate</name>
    </ligand>
</feature>
<feature type="binding site" evidence="1">
    <location>
        <position position="84"/>
    </location>
    <ligand>
        <name>substrate</name>
    </ligand>
</feature>
<feature type="binding site" evidence="1">
    <location>
        <position position="188"/>
    </location>
    <ligand>
        <name>substrate</name>
    </ligand>
</feature>
<feature type="site" description="Transition state stabilizer" evidence="1">
    <location>
        <position position="27"/>
    </location>
</feature>
<feature type="site" description="Transition state stabilizer" evidence="1">
    <location>
        <position position="251"/>
    </location>
</feature>
<sequence>MELKRENVLIEALPYMQEFYDSIMVIKVGGNAMVSTQIMEDIIKDIVLLRYVGIKPVIVHGGGPEITEKMERMGKKAEFFQGLRITDDETMEIARMVLVGNINTKIVSLIGIFGGKGVGFTGYDGRMILGHKQAVKRVLVDGVETEVDIGWVGESEVINPEILHIMLEKSYIPVISPIAVDAKGNALNINADTVAGDIAAALKAKKLILMTDVSGLLRNIKDPSSRISRVNLDQIDSLIEEGIISGGMIPKIKGAAVAVKSGVERAHVINGSVSHSMLLELFTDGGVGTMLYGPDHPPV</sequence>
<name>ARGB_METAC</name>
<organism>
    <name type="scientific">Methanosarcina acetivorans (strain ATCC 35395 / DSM 2834 / JCM 12185 / C2A)</name>
    <dbReference type="NCBI Taxonomy" id="188937"/>
    <lineage>
        <taxon>Archaea</taxon>
        <taxon>Methanobacteriati</taxon>
        <taxon>Methanobacteriota</taxon>
        <taxon>Stenosarchaea group</taxon>
        <taxon>Methanomicrobia</taxon>
        <taxon>Methanosarcinales</taxon>
        <taxon>Methanosarcinaceae</taxon>
        <taxon>Methanosarcina</taxon>
    </lineage>
</organism>
<gene>
    <name evidence="1" type="primary">argB</name>
    <name type="ordered locus">MA_4515</name>
</gene>